<accession>Q6CJ08</accession>
<comment type="function">
    <text evidence="1">Involved in pre-mRNA splicing.</text>
</comment>
<comment type="subunit">
    <text evidence="1">Associated with the spliceosome.</text>
</comment>
<comment type="subcellular location">
    <subcellularLocation>
        <location evidence="1">Cytoplasm</location>
    </subcellularLocation>
    <subcellularLocation>
        <location evidence="1">Nucleus</location>
    </subcellularLocation>
</comment>
<comment type="similarity">
    <text evidence="4">Belongs to the CWC26 family.</text>
</comment>
<organism>
    <name type="scientific">Kluyveromyces lactis (strain ATCC 8585 / CBS 2359 / DSM 70799 / NBRC 1267 / NRRL Y-1140 / WM37)</name>
    <name type="common">Yeast</name>
    <name type="synonym">Candida sphaerica</name>
    <dbReference type="NCBI Taxonomy" id="284590"/>
    <lineage>
        <taxon>Eukaryota</taxon>
        <taxon>Fungi</taxon>
        <taxon>Dikarya</taxon>
        <taxon>Ascomycota</taxon>
        <taxon>Saccharomycotina</taxon>
        <taxon>Saccharomycetes</taxon>
        <taxon>Saccharomycetales</taxon>
        <taxon>Saccharomycetaceae</taxon>
        <taxon>Kluyveromyces</taxon>
    </lineage>
</organism>
<dbReference type="EMBL" id="CR382126">
    <property type="protein sequence ID" value="CAG98789.1"/>
    <property type="molecule type" value="Genomic_DNA"/>
</dbReference>
<dbReference type="RefSeq" id="XP_456081.1">
    <property type="nucleotide sequence ID" value="XM_456081.1"/>
</dbReference>
<dbReference type="SMR" id="Q6CJ08"/>
<dbReference type="FunCoup" id="Q6CJ08">
    <property type="interactions" value="94"/>
</dbReference>
<dbReference type="STRING" id="284590.Q6CJ08"/>
<dbReference type="PaxDb" id="284590-Q6CJ08"/>
<dbReference type="KEGG" id="kla:KLLA0_F22407g"/>
<dbReference type="eggNOG" id="KOG2654">
    <property type="taxonomic scope" value="Eukaryota"/>
</dbReference>
<dbReference type="HOGENOM" id="CLU_086127_0_0_1"/>
<dbReference type="InParanoid" id="Q6CJ08"/>
<dbReference type="OMA" id="NGFENRW"/>
<dbReference type="Proteomes" id="UP000000598">
    <property type="component" value="Chromosome F"/>
</dbReference>
<dbReference type="GO" id="GO:0005737">
    <property type="term" value="C:cytoplasm"/>
    <property type="evidence" value="ECO:0007669"/>
    <property type="project" value="UniProtKB-SubCell"/>
</dbReference>
<dbReference type="GO" id="GO:0070274">
    <property type="term" value="C:RES complex"/>
    <property type="evidence" value="ECO:0007669"/>
    <property type="project" value="TreeGrafter"/>
</dbReference>
<dbReference type="GO" id="GO:0005684">
    <property type="term" value="C:U2-type spliceosomal complex"/>
    <property type="evidence" value="ECO:0007669"/>
    <property type="project" value="TreeGrafter"/>
</dbReference>
<dbReference type="GO" id="GO:0003723">
    <property type="term" value="F:RNA binding"/>
    <property type="evidence" value="ECO:0007669"/>
    <property type="project" value="TreeGrafter"/>
</dbReference>
<dbReference type="GO" id="GO:0000398">
    <property type="term" value="P:mRNA splicing, via spliceosome"/>
    <property type="evidence" value="ECO:0007669"/>
    <property type="project" value="TreeGrafter"/>
</dbReference>
<dbReference type="InterPro" id="IPR018609">
    <property type="entry name" value="Bud13"/>
</dbReference>
<dbReference type="InterPro" id="IPR051112">
    <property type="entry name" value="CWC26_splicing_factor"/>
</dbReference>
<dbReference type="PANTHER" id="PTHR31809">
    <property type="entry name" value="BUD13 HOMOLOG"/>
    <property type="match status" value="1"/>
</dbReference>
<dbReference type="PANTHER" id="PTHR31809:SF0">
    <property type="entry name" value="BUD13 HOMOLOG"/>
    <property type="match status" value="1"/>
</dbReference>
<dbReference type="Pfam" id="PF09736">
    <property type="entry name" value="Bud13"/>
    <property type="match status" value="1"/>
</dbReference>
<feature type="chain" id="PRO_0000079604" description="Pre-mRNA-splicing factor CWC26">
    <location>
        <begin position="1"/>
        <end position="268"/>
    </location>
</feature>
<feature type="region of interest" description="Disordered" evidence="3">
    <location>
        <begin position="1"/>
        <end position="41"/>
    </location>
</feature>
<feature type="coiled-coil region" evidence="2">
    <location>
        <begin position="104"/>
        <end position="170"/>
    </location>
</feature>
<feature type="compositionally biased region" description="Basic residues" evidence="3">
    <location>
        <begin position="12"/>
        <end position="29"/>
    </location>
</feature>
<keyword id="KW-0175">Coiled coil</keyword>
<keyword id="KW-0963">Cytoplasm</keyword>
<keyword id="KW-0507">mRNA processing</keyword>
<keyword id="KW-0508">mRNA splicing</keyword>
<keyword id="KW-0539">Nucleus</keyword>
<keyword id="KW-1185">Reference proteome</keyword>
<keyword id="KW-0747">Spliceosome</keyword>
<evidence type="ECO:0000250" key="1"/>
<evidence type="ECO:0000255" key="2"/>
<evidence type="ECO:0000256" key="3">
    <source>
        <dbReference type="SAM" id="MobiDB-lite"/>
    </source>
</evidence>
<evidence type="ECO:0000305" key="4"/>
<sequence length="268" mass="30745">MSLNDFLAKSYGSKHGKEKTKKSKDKSSHRKSDESKRVTSRNIDIIDKANLITEENKKAASSNKTGKSLWKNLETEKLELVQHVDVDKKDDSKERMSSGAFAGLQTAEEMEKQIAEKEKLSMQKSGLLKKNQNTVYRDEKGKVIDGYEEELKLREKANLTAKVRKEEELKIRNIGEVQISKLDRKTEKSALLSTEDPLNQGNTLRGTNTSLLGRRLYEKNFPENRFGIVPGYRWDGVDRSNGFETKWFAKSHDIADQKIKEQTTNREF</sequence>
<gene>
    <name type="primary">CWC26</name>
    <name type="ordered locus">KLLA0F22407g</name>
</gene>
<reference key="1">
    <citation type="journal article" date="2004" name="Nature">
        <title>Genome evolution in yeasts.</title>
        <authorList>
            <person name="Dujon B."/>
            <person name="Sherman D."/>
            <person name="Fischer G."/>
            <person name="Durrens P."/>
            <person name="Casaregola S."/>
            <person name="Lafontaine I."/>
            <person name="de Montigny J."/>
            <person name="Marck C."/>
            <person name="Neuveglise C."/>
            <person name="Talla E."/>
            <person name="Goffard N."/>
            <person name="Frangeul L."/>
            <person name="Aigle M."/>
            <person name="Anthouard V."/>
            <person name="Babour A."/>
            <person name="Barbe V."/>
            <person name="Barnay S."/>
            <person name="Blanchin S."/>
            <person name="Beckerich J.-M."/>
            <person name="Beyne E."/>
            <person name="Bleykasten C."/>
            <person name="Boisrame A."/>
            <person name="Boyer J."/>
            <person name="Cattolico L."/>
            <person name="Confanioleri F."/>
            <person name="de Daruvar A."/>
            <person name="Despons L."/>
            <person name="Fabre E."/>
            <person name="Fairhead C."/>
            <person name="Ferry-Dumazet H."/>
            <person name="Groppi A."/>
            <person name="Hantraye F."/>
            <person name="Hennequin C."/>
            <person name="Jauniaux N."/>
            <person name="Joyet P."/>
            <person name="Kachouri R."/>
            <person name="Kerrest A."/>
            <person name="Koszul R."/>
            <person name="Lemaire M."/>
            <person name="Lesur I."/>
            <person name="Ma L."/>
            <person name="Muller H."/>
            <person name="Nicaud J.-M."/>
            <person name="Nikolski M."/>
            <person name="Oztas S."/>
            <person name="Ozier-Kalogeropoulos O."/>
            <person name="Pellenz S."/>
            <person name="Potier S."/>
            <person name="Richard G.-F."/>
            <person name="Straub M.-L."/>
            <person name="Suleau A."/>
            <person name="Swennen D."/>
            <person name="Tekaia F."/>
            <person name="Wesolowski-Louvel M."/>
            <person name="Westhof E."/>
            <person name="Wirth B."/>
            <person name="Zeniou-Meyer M."/>
            <person name="Zivanovic Y."/>
            <person name="Bolotin-Fukuhara M."/>
            <person name="Thierry A."/>
            <person name="Bouchier C."/>
            <person name="Caudron B."/>
            <person name="Scarpelli C."/>
            <person name="Gaillardin C."/>
            <person name="Weissenbach J."/>
            <person name="Wincker P."/>
            <person name="Souciet J.-L."/>
        </authorList>
    </citation>
    <scope>NUCLEOTIDE SEQUENCE [LARGE SCALE GENOMIC DNA]</scope>
    <source>
        <strain>ATCC 8585 / CBS 2359 / DSM 70799 / NBRC 1267 / NRRL Y-1140 / WM37</strain>
    </source>
</reference>
<protein>
    <recommendedName>
        <fullName>Pre-mRNA-splicing factor CWC26</fullName>
    </recommendedName>
</protein>
<name>CWC26_KLULA</name>
<proteinExistence type="inferred from homology"/>